<dbReference type="EMBL" id="CP000885">
    <property type="protein sequence ID" value="ABX44009.1"/>
    <property type="molecule type" value="Genomic_DNA"/>
</dbReference>
<dbReference type="RefSeq" id="WP_012201657.1">
    <property type="nucleotide sequence ID" value="NC_010001.1"/>
</dbReference>
<dbReference type="SMR" id="A9KJI9"/>
<dbReference type="STRING" id="357809.Cphy_3662"/>
<dbReference type="KEGG" id="cpy:Cphy_3662"/>
<dbReference type="eggNOG" id="COG0091">
    <property type="taxonomic scope" value="Bacteria"/>
</dbReference>
<dbReference type="HOGENOM" id="CLU_083987_3_1_9"/>
<dbReference type="OrthoDB" id="9805969at2"/>
<dbReference type="Proteomes" id="UP000000370">
    <property type="component" value="Chromosome"/>
</dbReference>
<dbReference type="GO" id="GO:0022625">
    <property type="term" value="C:cytosolic large ribosomal subunit"/>
    <property type="evidence" value="ECO:0007669"/>
    <property type="project" value="TreeGrafter"/>
</dbReference>
<dbReference type="GO" id="GO:0019843">
    <property type="term" value="F:rRNA binding"/>
    <property type="evidence" value="ECO:0007669"/>
    <property type="project" value="UniProtKB-UniRule"/>
</dbReference>
<dbReference type="GO" id="GO:0003735">
    <property type="term" value="F:structural constituent of ribosome"/>
    <property type="evidence" value="ECO:0007669"/>
    <property type="project" value="InterPro"/>
</dbReference>
<dbReference type="GO" id="GO:0006412">
    <property type="term" value="P:translation"/>
    <property type="evidence" value="ECO:0007669"/>
    <property type="project" value="UniProtKB-UniRule"/>
</dbReference>
<dbReference type="CDD" id="cd00336">
    <property type="entry name" value="Ribosomal_L22"/>
    <property type="match status" value="1"/>
</dbReference>
<dbReference type="Gene3D" id="3.90.470.10">
    <property type="entry name" value="Ribosomal protein L22/L17"/>
    <property type="match status" value="1"/>
</dbReference>
<dbReference type="HAMAP" id="MF_01331_B">
    <property type="entry name" value="Ribosomal_uL22_B"/>
    <property type="match status" value="1"/>
</dbReference>
<dbReference type="InterPro" id="IPR001063">
    <property type="entry name" value="Ribosomal_uL22"/>
</dbReference>
<dbReference type="InterPro" id="IPR005727">
    <property type="entry name" value="Ribosomal_uL22_bac/chlpt-type"/>
</dbReference>
<dbReference type="InterPro" id="IPR047867">
    <property type="entry name" value="Ribosomal_uL22_bac/org-type"/>
</dbReference>
<dbReference type="InterPro" id="IPR018260">
    <property type="entry name" value="Ribosomal_uL22_CS"/>
</dbReference>
<dbReference type="InterPro" id="IPR036394">
    <property type="entry name" value="Ribosomal_uL22_sf"/>
</dbReference>
<dbReference type="NCBIfam" id="TIGR01044">
    <property type="entry name" value="rplV_bact"/>
    <property type="match status" value="1"/>
</dbReference>
<dbReference type="PANTHER" id="PTHR13501">
    <property type="entry name" value="CHLOROPLAST 50S RIBOSOMAL PROTEIN L22-RELATED"/>
    <property type="match status" value="1"/>
</dbReference>
<dbReference type="PANTHER" id="PTHR13501:SF8">
    <property type="entry name" value="LARGE RIBOSOMAL SUBUNIT PROTEIN UL22M"/>
    <property type="match status" value="1"/>
</dbReference>
<dbReference type="Pfam" id="PF00237">
    <property type="entry name" value="Ribosomal_L22"/>
    <property type="match status" value="1"/>
</dbReference>
<dbReference type="SUPFAM" id="SSF54843">
    <property type="entry name" value="Ribosomal protein L22"/>
    <property type="match status" value="1"/>
</dbReference>
<dbReference type="PROSITE" id="PS00464">
    <property type="entry name" value="RIBOSOMAL_L22"/>
    <property type="match status" value="1"/>
</dbReference>
<proteinExistence type="inferred from homology"/>
<evidence type="ECO:0000255" key="1">
    <source>
        <dbReference type="HAMAP-Rule" id="MF_01331"/>
    </source>
</evidence>
<evidence type="ECO:0000256" key="2">
    <source>
        <dbReference type="SAM" id="MobiDB-lite"/>
    </source>
</evidence>
<evidence type="ECO:0000305" key="3"/>
<organism>
    <name type="scientific">Lachnoclostridium phytofermentans (strain ATCC 700394 / DSM 18823 / ISDg)</name>
    <name type="common">Clostridium phytofermentans</name>
    <dbReference type="NCBI Taxonomy" id="357809"/>
    <lineage>
        <taxon>Bacteria</taxon>
        <taxon>Bacillati</taxon>
        <taxon>Bacillota</taxon>
        <taxon>Clostridia</taxon>
        <taxon>Lachnospirales</taxon>
        <taxon>Lachnospiraceae</taxon>
    </lineage>
</organism>
<accession>A9KJI9</accession>
<feature type="chain" id="PRO_0000354458" description="Large ribosomal subunit protein uL22">
    <location>
        <begin position="1"/>
        <end position="128"/>
    </location>
</feature>
<feature type="region of interest" description="Disordered" evidence="2">
    <location>
        <begin position="1"/>
        <end position="22"/>
    </location>
</feature>
<feature type="compositionally biased region" description="Basic and acidic residues" evidence="2">
    <location>
        <begin position="9"/>
        <end position="21"/>
    </location>
</feature>
<reference key="1">
    <citation type="submission" date="2007-11" db="EMBL/GenBank/DDBJ databases">
        <title>Complete genome sequence of Clostridium phytofermentans ISDg.</title>
        <authorList>
            <person name="Leschine S.B."/>
            <person name="Warnick T.A."/>
            <person name="Blanchard J.L."/>
            <person name="Schnell D.J."/>
            <person name="Petit E.L."/>
            <person name="LaTouf W.G."/>
            <person name="Copeland A."/>
            <person name="Lucas S."/>
            <person name="Lapidus A."/>
            <person name="Barry K."/>
            <person name="Glavina del Rio T."/>
            <person name="Dalin E."/>
            <person name="Tice H."/>
            <person name="Pitluck S."/>
            <person name="Kiss H."/>
            <person name="Brettin T."/>
            <person name="Bruce D."/>
            <person name="Detter J.C."/>
            <person name="Han C."/>
            <person name="Kuske C."/>
            <person name="Schmutz J."/>
            <person name="Larimer F."/>
            <person name="Land M."/>
            <person name="Hauser L."/>
            <person name="Kyrpides N."/>
            <person name="Kim E.A."/>
            <person name="Richardson P."/>
        </authorList>
    </citation>
    <scope>NUCLEOTIDE SEQUENCE [LARGE SCALE GENOMIC DNA]</scope>
    <source>
        <strain>ATCC 700394 / DSM 18823 / ISDg</strain>
    </source>
</reference>
<sequence length="128" mass="14406">MARGHRSQIKRERNANKDTRPSAKLSYARVSVQKACFVLDAVRGKDVQTALGILAYNPRYASTLIEKLLKSAIANAENNNGMDVSKLYIEECYAGCAPTMKRIKPRAQGRAYRILKRLSHITIVLNER</sequence>
<keyword id="KW-1185">Reference proteome</keyword>
<keyword id="KW-0687">Ribonucleoprotein</keyword>
<keyword id="KW-0689">Ribosomal protein</keyword>
<keyword id="KW-0694">RNA-binding</keyword>
<keyword id="KW-0699">rRNA-binding</keyword>
<name>RL22_LACP7</name>
<comment type="function">
    <text evidence="1">This protein binds specifically to 23S rRNA; its binding is stimulated by other ribosomal proteins, e.g. L4, L17, and L20. It is important during the early stages of 50S assembly. It makes multiple contacts with different domains of the 23S rRNA in the assembled 50S subunit and ribosome (By similarity).</text>
</comment>
<comment type="function">
    <text evidence="1">The globular domain of the protein is located near the polypeptide exit tunnel on the outside of the subunit, while an extended beta-hairpin is found that lines the wall of the exit tunnel in the center of the 70S ribosome.</text>
</comment>
<comment type="subunit">
    <text evidence="1">Part of the 50S ribosomal subunit.</text>
</comment>
<comment type="similarity">
    <text evidence="1">Belongs to the universal ribosomal protein uL22 family.</text>
</comment>
<protein>
    <recommendedName>
        <fullName evidence="1">Large ribosomal subunit protein uL22</fullName>
    </recommendedName>
    <alternativeName>
        <fullName evidence="3">50S ribosomal protein L22</fullName>
    </alternativeName>
</protein>
<gene>
    <name evidence="1" type="primary">rplV</name>
    <name type="ordered locus">Cphy_3662</name>
</gene>